<gene>
    <name evidence="1" type="primary">lipB</name>
    <name type="ordered locus">Pnap_0243</name>
</gene>
<accession>A1VIU0</accession>
<evidence type="ECO:0000255" key="1">
    <source>
        <dbReference type="HAMAP-Rule" id="MF_00013"/>
    </source>
</evidence>
<evidence type="ECO:0000255" key="2">
    <source>
        <dbReference type="PROSITE-ProRule" id="PRU01067"/>
    </source>
</evidence>
<comment type="function">
    <text evidence="1">Catalyzes the transfer of endogenously produced octanoic acid from octanoyl-acyl-carrier-protein onto the lipoyl domains of lipoate-dependent enzymes. Lipoyl-ACP can also act as a substrate although octanoyl-ACP is likely to be the physiological substrate.</text>
</comment>
<comment type="catalytic activity">
    <reaction evidence="1">
        <text>octanoyl-[ACP] + L-lysyl-[protein] = N(6)-octanoyl-L-lysyl-[protein] + holo-[ACP] + H(+)</text>
        <dbReference type="Rhea" id="RHEA:17665"/>
        <dbReference type="Rhea" id="RHEA-COMP:9636"/>
        <dbReference type="Rhea" id="RHEA-COMP:9685"/>
        <dbReference type="Rhea" id="RHEA-COMP:9752"/>
        <dbReference type="Rhea" id="RHEA-COMP:9928"/>
        <dbReference type="ChEBI" id="CHEBI:15378"/>
        <dbReference type="ChEBI" id="CHEBI:29969"/>
        <dbReference type="ChEBI" id="CHEBI:64479"/>
        <dbReference type="ChEBI" id="CHEBI:78463"/>
        <dbReference type="ChEBI" id="CHEBI:78809"/>
        <dbReference type="EC" id="2.3.1.181"/>
    </reaction>
</comment>
<comment type="pathway">
    <text evidence="1">Protein modification; protein lipoylation via endogenous pathway; protein N(6)-(lipoyl)lysine from octanoyl-[acyl-carrier-protein]: step 1/2.</text>
</comment>
<comment type="subcellular location">
    <subcellularLocation>
        <location evidence="1">Cytoplasm</location>
    </subcellularLocation>
</comment>
<comment type="miscellaneous">
    <text evidence="1">In the reaction, the free carboxyl group of octanoic acid is attached via an amide linkage to the epsilon-amino group of a specific lysine residue of lipoyl domains of lipoate-dependent enzymes.</text>
</comment>
<comment type="similarity">
    <text evidence="1">Belongs to the LipB family.</text>
</comment>
<reference key="1">
    <citation type="journal article" date="2009" name="Environ. Microbiol.">
        <title>The genome of Polaromonas naphthalenivorans strain CJ2, isolated from coal tar-contaminated sediment, reveals physiological and metabolic versatility and evolution through extensive horizontal gene transfer.</title>
        <authorList>
            <person name="Yagi J.M."/>
            <person name="Sims D."/>
            <person name="Brettin T."/>
            <person name="Bruce D."/>
            <person name="Madsen E.L."/>
        </authorList>
    </citation>
    <scope>NUCLEOTIDE SEQUENCE [LARGE SCALE GENOMIC DNA]</scope>
    <source>
        <strain>CJ2</strain>
    </source>
</reference>
<organism>
    <name type="scientific">Polaromonas naphthalenivorans (strain CJ2)</name>
    <dbReference type="NCBI Taxonomy" id="365044"/>
    <lineage>
        <taxon>Bacteria</taxon>
        <taxon>Pseudomonadati</taxon>
        <taxon>Pseudomonadota</taxon>
        <taxon>Betaproteobacteria</taxon>
        <taxon>Burkholderiales</taxon>
        <taxon>Comamonadaceae</taxon>
        <taxon>Polaromonas</taxon>
    </lineage>
</organism>
<keyword id="KW-0012">Acyltransferase</keyword>
<keyword id="KW-0963">Cytoplasm</keyword>
<keyword id="KW-1185">Reference proteome</keyword>
<keyword id="KW-0808">Transferase</keyword>
<sequence length="224" mass="24319">MTIDTRQLGRVDYLPTYQAMQDFTAARNEATPDALWICEHPAVYTQGLAGKIDHLLNPGEIPVVQTNRGGQVTFHGPGQVVVYPLIDLKRAGYFVKEYVYRIEESVIRTLAHFGVTGHRVAGSPGIYVRMDDPFSHAALSGPVHPSDPFRGLGKIAALGIKVSRHCTYHGVALNVAMDLEPFSRINPCGYAGLKTTDLSTIGVSASWQEAASVLGQKLATYLAP</sequence>
<dbReference type="EC" id="2.3.1.181" evidence="1"/>
<dbReference type="EMBL" id="CP000529">
    <property type="protein sequence ID" value="ABM35568.1"/>
    <property type="molecule type" value="Genomic_DNA"/>
</dbReference>
<dbReference type="RefSeq" id="WP_011799676.1">
    <property type="nucleotide sequence ID" value="NC_008781.1"/>
</dbReference>
<dbReference type="SMR" id="A1VIU0"/>
<dbReference type="STRING" id="365044.Pnap_0243"/>
<dbReference type="KEGG" id="pna:Pnap_0243"/>
<dbReference type="eggNOG" id="COG0321">
    <property type="taxonomic scope" value="Bacteria"/>
</dbReference>
<dbReference type="HOGENOM" id="CLU_035168_3_1_4"/>
<dbReference type="OrthoDB" id="9787061at2"/>
<dbReference type="UniPathway" id="UPA00538">
    <property type="reaction ID" value="UER00592"/>
</dbReference>
<dbReference type="Proteomes" id="UP000000644">
    <property type="component" value="Chromosome"/>
</dbReference>
<dbReference type="GO" id="GO:0005737">
    <property type="term" value="C:cytoplasm"/>
    <property type="evidence" value="ECO:0007669"/>
    <property type="project" value="UniProtKB-SubCell"/>
</dbReference>
<dbReference type="GO" id="GO:0033819">
    <property type="term" value="F:lipoyl(octanoyl) transferase activity"/>
    <property type="evidence" value="ECO:0007669"/>
    <property type="project" value="UniProtKB-EC"/>
</dbReference>
<dbReference type="GO" id="GO:0036211">
    <property type="term" value="P:protein modification process"/>
    <property type="evidence" value="ECO:0007669"/>
    <property type="project" value="InterPro"/>
</dbReference>
<dbReference type="CDD" id="cd16444">
    <property type="entry name" value="LipB"/>
    <property type="match status" value="1"/>
</dbReference>
<dbReference type="Gene3D" id="3.30.930.10">
    <property type="entry name" value="Bira Bifunctional Protein, Domain 2"/>
    <property type="match status" value="1"/>
</dbReference>
<dbReference type="HAMAP" id="MF_00013">
    <property type="entry name" value="LipB"/>
    <property type="match status" value="1"/>
</dbReference>
<dbReference type="InterPro" id="IPR045864">
    <property type="entry name" value="aa-tRNA-synth_II/BPL/LPL"/>
</dbReference>
<dbReference type="InterPro" id="IPR004143">
    <property type="entry name" value="BPL_LPL_catalytic"/>
</dbReference>
<dbReference type="InterPro" id="IPR000544">
    <property type="entry name" value="Octanoyltransferase"/>
</dbReference>
<dbReference type="InterPro" id="IPR020605">
    <property type="entry name" value="Octanoyltransferase_CS"/>
</dbReference>
<dbReference type="NCBIfam" id="TIGR00214">
    <property type="entry name" value="lipB"/>
    <property type="match status" value="1"/>
</dbReference>
<dbReference type="NCBIfam" id="NF010922">
    <property type="entry name" value="PRK14342.1"/>
    <property type="match status" value="1"/>
</dbReference>
<dbReference type="NCBIfam" id="NF010925">
    <property type="entry name" value="PRK14345.1"/>
    <property type="match status" value="1"/>
</dbReference>
<dbReference type="PANTHER" id="PTHR10993:SF7">
    <property type="entry name" value="LIPOYLTRANSFERASE 2, MITOCHONDRIAL-RELATED"/>
    <property type="match status" value="1"/>
</dbReference>
<dbReference type="PANTHER" id="PTHR10993">
    <property type="entry name" value="OCTANOYLTRANSFERASE"/>
    <property type="match status" value="1"/>
</dbReference>
<dbReference type="Pfam" id="PF21948">
    <property type="entry name" value="LplA-B_cat"/>
    <property type="match status" value="1"/>
</dbReference>
<dbReference type="PIRSF" id="PIRSF016262">
    <property type="entry name" value="LPLase"/>
    <property type="match status" value="1"/>
</dbReference>
<dbReference type="SUPFAM" id="SSF55681">
    <property type="entry name" value="Class II aaRS and biotin synthetases"/>
    <property type="match status" value="1"/>
</dbReference>
<dbReference type="PROSITE" id="PS51733">
    <property type="entry name" value="BPL_LPL_CATALYTIC"/>
    <property type="match status" value="1"/>
</dbReference>
<dbReference type="PROSITE" id="PS01313">
    <property type="entry name" value="LIPB"/>
    <property type="match status" value="1"/>
</dbReference>
<name>LIPB_POLNA</name>
<feature type="chain" id="PRO_0000321657" description="Octanoyltransferase">
    <location>
        <begin position="1"/>
        <end position="224"/>
    </location>
</feature>
<feature type="domain" description="BPL/LPL catalytic" evidence="2">
    <location>
        <begin position="29"/>
        <end position="224"/>
    </location>
</feature>
<feature type="active site" description="Acyl-thioester intermediate" evidence="1">
    <location>
        <position position="188"/>
    </location>
</feature>
<feature type="binding site" evidence="1">
    <location>
        <begin position="68"/>
        <end position="75"/>
    </location>
    <ligand>
        <name>substrate</name>
    </ligand>
</feature>
<feature type="binding site" evidence="1">
    <location>
        <begin position="157"/>
        <end position="159"/>
    </location>
    <ligand>
        <name>substrate</name>
    </ligand>
</feature>
<feature type="binding site" evidence="1">
    <location>
        <begin position="170"/>
        <end position="172"/>
    </location>
    <ligand>
        <name>substrate</name>
    </ligand>
</feature>
<feature type="site" description="Lowers pKa of active site Cys" evidence="1">
    <location>
        <position position="154"/>
    </location>
</feature>
<proteinExistence type="inferred from homology"/>
<protein>
    <recommendedName>
        <fullName evidence="1">Octanoyltransferase</fullName>
        <ecNumber evidence="1">2.3.1.181</ecNumber>
    </recommendedName>
    <alternativeName>
        <fullName evidence="1">Lipoate-protein ligase B</fullName>
    </alternativeName>
    <alternativeName>
        <fullName evidence="1">Lipoyl/octanoyl transferase</fullName>
    </alternativeName>
    <alternativeName>
        <fullName evidence="1">Octanoyl-[acyl-carrier-protein]-protein N-octanoyltransferase</fullName>
    </alternativeName>
</protein>